<reference key="1">
    <citation type="journal article" date="2004" name="Nucleic Acids Res.">
        <title>Genome sequence of Symbiobacterium thermophilum, an uncultivable bacterium that depends on microbial commensalism.</title>
        <authorList>
            <person name="Ueda K."/>
            <person name="Yamashita A."/>
            <person name="Ishikawa J."/>
            <person name="Shimada M."/>
            <person name="Watsuji T."/>
            <person name="Morimura K."/>
            <person name="Ikeda H."/>
            <person name="Hattori M."/>
            <person name="Beppu T."/>
        </authorList>
    </citation>
    <scope>NUCLEOTIDE SEQUENCE [LARGE SCALE GENOMIC DNA]</scope>
    <source>
        <strain>DSM 24528 / JCM 14929 / IAM 14863 / T</strain>
    </source>
</reference>
<proteinExistence type="inferred from homology"/>
<accession>Q67LN9</accession>
<comment type="catalytic activity">
    <reaction evidence="1">
        <text>tRNA(His) + L-histidine + ATP = L-histidyl-tRNA(His) + AMP + diphosphate + H(+)</text>
        <dbReference type="Rhea" id="RHEA:17313"/>
        <dbReference type="Rhea" id="RHEA-COMP:9665"/>
        <dbReference type="Rhea" id="RHEA-COMP:9689"/>
        <dbReference type="ChEBI" id="CHEBI:15378"/>
        <dbReference type="ChEBI" id="CHEBI:30616"/>
        <dbReference type="ChEBI" id="CHEBI:33019"/>
        <dbReference type="ChEBI" id="CHEBI:57595"/>
        <dbReference type="ChEBI" id="CHEBI:78442"/>
        <dbReference type="ChEBI" id="CHEBI:78527"/>
        <dbReference type="ChEBI" id="CHEBI:456215"/>
        <dbReference type="EC" id="6.1.1.21"/>
    </reaction>
</comment>
<comment type="subunit">
    <text evidence="1">Homodimer.</text>
</comment>
<comment type="subcellular location">
    <subcellularLocation>
        <location evidence="1">Cytoplasm</location>
    </subcellularLocation>
</comment>
<comment type="similarity">
    <text evidence="1">Belongs to the class-II aminoacyl-tRNA synthetase family.</text>
</comment>
<sequence>MSIQAPRGFNDILPGEQYGWRDSYRWQRLEEIFREVARLYGYQELRPPMVEYVDLFIHGVGATTDIVTKEMFNITPRGDDPDARRMAMRPEFTAGLVRAWLENGLYNNPQPTKIFAYGPAFRYENVQKGRFRGFHQLDVEVFGAQDPAVDAEVIKLGLDVVARLGLTGLVVSVNSIGCPQCRPRYRQALQDHFRPHLGELCEDCNTRFEKNPLRLLDCKRDADHPAQRTAPVTLDYLCDDCRRHWEGLLSHLAAMGIPYQIDTRIVRGLDYYTKTVFEVLHPKLGAQSALWGGGRYDGLIEIVGGKPTPGVGFGMGMERVLMVLEEEGLTAPFADRPRLDVFVATLGEAARPVGLKLLYALRDAGLSADIDYLGRSLKAQMKYAGKQNSRYVVILGEDEVRQGVASVKHMDEGTQESVPLDQIISHLRRAEA</sequence>
<keyword id="KW-0030">Aminoacyl-tRNA synthetase</keyword>
<keyword id="KW-0067">ATP-binding</keyword>
<keyword id="KW-0963">Cytoplasm</keyword>
<keyword id="KW-0436">Ligase</keyword>
<keyword id="KW-0547">Nucleotide-binding</keyword>
<keyword id="KW-0648">Protein biosynthesis</keyword>
<keyword id="KW-1185">Reference proteome</keyword>
<organism>
    <name type="scientific">Symbiobacterium thermophilum (strain DSM 24528 / JCM 14929 / IAM 14863 / T)</name>
    <dbReference type="NCBI Taxonomy" id="292459"/>
    <lineage>
        <taxon>Bacteria</taxon>
        <taxon>Bacillati</taxon>
        <taxon>Bacillota</taxon>
        <taxon>Clostridia</taxon>
        <taxon>Eubacteriales</taxon>
        <taxon>Symbiobacteriaceae</taxon>
        <taxon>Symbiobacterium</taxon>
    </lineage>
</organism>
<gene>
    <name evidence="1" type="primary">hisS</name>
    <name type="ordered locus">STH2422</name>
</gene>
<protein>
    <recommendedName>
        <fullName evidence="1">Histidine--tRNA ligase</fullName>
        <ecNumber evidence="1">6.1.1.21</ecNumber>
    </recommendedName>
    <alternativeName>
        <fullName evidence="1">Histidyl-tRNA synthetase</fullName>
        <shortName evidence="1">HisRS</shortName>
    </alternativeName>
</protein>
<name>SYH_SYMTH</name>
<feature type="chain" id="PRO_0000136275" description="Histidine--tRNA ligase">
    <location>
        <begin position="1"/>
        <end position="432"/>
    </location>
</feature>
<dbReference type="EC" id="6.1.1.21" evidence="1"/>
<dbReference type="EMBL" id="AP006840">
    <property type="protein sequence ID" value="BAD41407.1"/>
    <property type="molecule type" value="Genomic_DNA"/>
</dbReference>
<dbReference type="RefSeq" id="WP_011196545.1">
    <property type="nucleotide sequence ID" value="NC_006177.1"/>
</dbReference>
<dbReference type="SMR" id="Q67LN9"/>
<dbReference type="STRING" id="292459.STH2422"/>
<dbReference type="KEGG" id="sth:STH2422"/>
<dbReference type="eggNOG" id="COG0124">
    <property type="taxonomic scope" value="Bacteria"/>
</dbReference>
<dbReference type="HOGENOM" id="CLU_025113_1_1_9"/>
<dbReference type="OrthoDB" id="9800814at2"/>
<dbReference type="Proteomes" id="UP000000417">
    <property type="component" value="Chromosome"/>
</dbReference>
<dbReference type="GO" id="GO:0005737">
    <property type="term" value="C:cytoplasm"/>
    <property type="evidence" value="ECO:0007669"/>
    <property type="project" value="UniProtKB-SubCell"/>
</dbReference>
<dbReference type="GO" id="GO:0005524">
    <property type="term" value="F:ATP binding"/>
    <property type="evidence" value="ECO:0007669"/>
    <property type="project" value="UniProtKB-UniRule"/>
</dbReference>
<dbReference type="GO" id="GO:0140096">
    <property type="term" value="F:catalytic activity, acting on a protein"/>
    <property type="evidence" value="ECO:0007669"/>
    <property type="project" value="UniProtKB-ARBA"/>
</dbReference>
<dbReference type="GO" id="GO:0004821">
    <property type="term" value="F:histidine-tRNA ligase activity"/>
    <property type="evidence" value="ECO:0007669"/>
    <property type="project" value="UniProtKB-UniRule"/>
</dbReference>
<dbReference type="GO" id="GO:0016740">
    <property type="term" value="F:transferase activity"/>
    <property type="evidence" value="ECO:0007669"/>
    <property type="project" value="UniProtKB-ARBA"/>
</dbReference>
<dbReference type="GO" id="GO:0006427">
    <property type="term" value="P:histidyl-tRNA aminoacylation"/>
    <property type="evidence" value="ECO:0007669"/>
    <property type="project" value="UniProtKB-UniRule"/>
</dbReference>
<dbReference type="CDD" id="cd00773">
    <property type="entry name" value="HisRS-like_core"/>
    <property type="match status" value="1"/>
</dbReference>
<dbReference type="CDD" id="cd00859">
    <property type="entry name" value="HisRS_anticodon"/>
    <property type="match status" value="1"/>
</dbReference>
<dbReference type="Gene3D" id="3.40.50.800">
    <property type="entry name" value="Anticodon-binding domain"/>
    <property type="match status" value="1"/>
</dbReference>
<dbReference type="Gene3D" id="3.30.930.10">
    <property type="entry name" value="Bira Bifunctional Protein, Domain 2"/>
    <property type="match status" value="1"/>
</dbReference>
<dbReference type="HAMAP" id="MF_00127">
    <property type="entry name" value="His_tRNA_synth"/>
    <property type="match status" value="1"/>
</dbReference>
<dbReference type="InterPro" id="IPR006195">
    <property type="entry name" value="aa-tRNA-synth_II"/>
</dbReference>
<dbReference type="InterPro" id="IPR045864">
    <property type="entry name" value="aa-tRNA-synth_II/BPL/LPL"/>
</dbReference>
<dbReference type="InterPro" id="IPR004154">
    <property type="entry name" value="Anticodon-bd"/>
</dbReference>
<dbReference type="InterPro" id="IPR036621">
    <property type="entry name" value="Anticodon-bd_dom_sf"/>
</dbReference>
<dbReference type="InterPro" id="IPR015807">
    <property type="entry name" value="His-tRNA-ligase"/>
</dbReference>
<dbReference type="InterPro" id="IPR041715">
    <property type="entry name" value="HisRS-like_core"/>
</dbReference>
<dbReference type="InterPro" id="IPR004516">
    <property type="entry name" value="HisRS/HisZ"/>
</dbReference>
<dbReference type="InterPro" id="IPR033656">
    <property type="entry name" value="HisRS_anticodon"/>
</dbReference>
<dbReference type="NCBIfam" id="TIGR00442">
    <property type="entry name" value="hisS"/>
    <property type="match status" value="1"/>
</dbReference>
<dbReference type="PANTHER" id="PTHR43707:SF1">
    <property type="entry name" value="HISTIDINE--TRNA LIGASE, MITOCHONDRIAL-RELATED"/>
    <property type="match status" value="1"/>
</dbReference>
<dbReference type="PANTHER" id="PTHR43707">
    <property type="entry name" value="HISTIDYL-TRNA SYNTHETASE"/>
    <property type="match status" value="1"/>
</dbReference>
<dbReference type="Pfam" id="PF03129">
    <property type="entry name" value="HGTP_anticodon"/>
    <property type="match status" value="1"/>
</dbReference>
<dbReference type="Pfam" id="PF13393">
    <property type="entry name" value="tRNA-synt_His"/>
    <property type="match status" value="1"/>
</dbReference>
<dbReference type="PIRSF" id="PIRSF001549">
    <property type="entry name" value="His-tRNA_synth"/>
    <property type="match status" value="1"/>
</dbReference>
<dbReference type="SUPFAM" id="SSF52954">
    <property type="entry name" value="Class II aaRS ABD-related"/>
    <property type="match status" value="1"/>
</dbReference>
<dbReference type="SUPFAM" id="SSF55681">
    <property type="entry name" value="Class II aaRS and biotin synthetases"/>
    <property type="match status" value="1"/>
</dbReference>
<dbReference type="PROSITE" id="PS50862">
    <property type="entry name" value="AA_TRNA_LIGASE_II"/>
    <property type="match status" value="1"/>
</dbReference>
<evidence type="ECO:0000255" key="1">
    <source>
        <dbReference type="HAMAP-Rule" id="MF_00127"/>
    </source>
</evidence>